<protein>
    <recommendedName>
        <fullName evidence="1">Large ribosomal subunit protein bL35</fullName>
    </recommendedName>
    <alternativeName>
        <fullName evidence="3">50S ribosomal protein L35</fullName>
    </alternativeName>
</protein>
<feature type="chain" id="PRO_0000258751" description="Large ribosomal subunit protein bL35">
    <location>
        <begin position="1"/>
        <end position="65"/>
    </location>
</feature>
<feature type="region of interest" description="Disordered" evidence="2">
    <location>
        <begin position="1"/>
        <end position="22"/>
    </location>
</feature>
<feature type="compositionally biased region" description="Basic residues" evidence="2">
    <location>
        <begin position="10"/>
        <end position="22"/>
    </location>
</feature>
<organism>
    <name type="scientific">Shigella boydii serotype 4 (strain Sb227)</name>
    <dbReference type="NCBI Taxonomy" id="300268"/>
    <lineage>
        <taxon>Bacteria</taxon>
        <taxon>Pseudomonadati</taxon>
        <taxon>Pseudomonadota</taxon>
        <taxon>Gammaproteobacteria</taxon>
        <taxon>Enterobacterales</taxon>
        <taxon>Enterobacteriaceae</taxon>
        <taxon>Shigella</taxon>
    </lineage>
</organism>
<reference key="1">
    <citation type="journal article" date="2005" name="Nucleic Acids Res.">
        <title>Genome dynamics and diversity of Shigella species, the etiologic agents of bacillary dysentery.</title>
        <authorList>
            <person name="Yang F."/>
            <person name="Yang J."/>
            <person name="Zhang X."/>
            <person name="Chen L."/>
            <person name="Jiang Y."/>
            <person name="Yan Y."/>
            <person name="Tang X."/>
            <person name="Wang J."/>
            <person name="Xiong Z."/>
            <person name="Dong J."/>
            <person name="Xue Y."/>
            <person name="Zhu Y."/>
            <person name="Xu X."/>
            <person name="Sun L."/>
            <person name="Chen S."/>
            <person name="Nie H."/>
            <person name="Peng J."/>
            <person name="Xu J."/>
            <person name="Wang Y."/>
            <person name="Yuan Z."/>
            <person name="Wen Y."/>
            <person name="Yao Z."/>
            <person name="Shen Y."/>
            <person name="Qiang B."/>
            <person name="Hou Y."/>
            <person name="Yu J."/>
            <person name="Jin Q."/>
        </authorList>
    </citation>
    <scope>NUCLEOTIDE SEQUENCE [LARGE SCALE GENOMIC DNA]</scope>
    <source>
        <strain>Sb227</strain>
    </source>
</reference>
<sequence length="65" mass="7289">MPKIKTVRGAAKRFKKTGKGGFKHKHANLRHILTKKATKRKRHLRPKAMVSKGDLGLVIACLPYA</sequence>
<dbReference type="EMBL" id="CP000036">
    <property type="protein sequence ID" value="ABB66000.1"/>
    <property type="molecule type" value="Genomic_DNA"/>
</dbReference>
<dbReference type="RefSeq" id="WP_001124225.1">
    <property type="nucleotide sequence ID" value="NC_007613.1"/>
</dbReference>
<dbReference type="SMR" id="Q321K8"/>
<dbReference type="GeneID" id="97601348"/>
<dbReference type="KEGG" id="sbo:SBO_1377"/>
<dbReference type="HOGENOM" id="CLU_169643_1_1_6"/>
<dbReference type="Proteomes" id="UP000007067">
    <property type="component" value="Chromosome"/>
</dbReference>
<dbReference type="GO" id="GO:0022625">
    <property type="term" value="C:cytosolic large ribosomal subunit"/>
    <property type="evidence" value="ECO:0007669"/>
    <property type="project" value="TreeGrafter"/>
</dbReference>
<dbReference type="GO" id="GO:0003735">
    <property type="term" value="F:structural constituent of ribosome"/>
    <property type="evidence" value="ECO:0007669"/>
    <property type="project" value="InterPro"/>
</dbReference>
<dbReference type="GO" id="GO:0006412">
    <property type="term" value="P:translation"/>
    <property type="evidence" value="ECO:0007669"/>
    <property type="project" value="UniProtKB-UniRule"/>
</dbReference>
<dbReference type="FunFam" id="4.10.410.60:FF:000001">
    <property type="entry name" value="50S ribosomal protein L35"/>
    <property type="match status" value="1"/>
</dbReference>
<dbReference type="Gene3D" id="4.10.410.60">
    <property type="match status" value="1"/>
</dbReference>
<dbReference type="HAMAP" id="MF_00514">
    <property type="entry name" value="Ribosomal_bL35"/>
    <property type="match status" value="1"/>
</dbReference>
<dbReference type="InterPro" id="IPR001706">
    <property type="entry name" value="Ribosomal_bL35"/>
</dbReference>
<dbReference type="InterPro" id="IPR021137">
    <property type="entry name" value="Ribosomal_bL35-like"/>
</dbReference>
<dbReference type="InterPro" id="IPR018265">
    <property type="entry name" value="Ribosomal_bL35_CS"/>
</dbReference>
<dbReference type="InterPro" id="IPR037229">
    <property type="entry name" value="Ribosomal_bL35_sf"/>
</dbReference>
<dbReference type="NCBIfam" id="TIGR00001">
    <property type="entry name" value="rpmI_bact"/>
    <property type="match status" value="1"/>
</dbReference>
<dbReference type="PANTHER" id="PTHR33343">
    <property type="entry name" value="54S RIBOSOMAL PROTEIN BL35M"/>
    <property type="match status" value="1"/>
</dbReference>
<dbReference type="PANTHER" id="PTHR33343:SF1">
    <property type="entry name" value="LARGE RIBOSOMAL SUBUNIT PROTEIN BL35M"/>
    <property type="match status" value="1"/>
</dbReference>
<dbReference type="Pfam" id="PF01632">
    <property type="entry name" value="Ribosomal_L35p"/>
    <property type="match status" value="1"/>
</dbReference>
<dbReference type="PRINTS" id="PR00064">
    <property type="entry name" value="RIBOSOMALL35"/>
</dbReference>
<dbReference type="SUPFAM" id="SSF143034">
    <property type="entry name" value="L35p-like"/>
    <property type="match status" value="1"/>
</dbReference>
<dbReference type="PROSITE" id="PS00936">
    <property type="entry name" value="RIBOSOMAL_L35"/>
    <property type="match status" value="1"/>
</dbReference>
<accession>Q321K8</accession>
<name>RL35_SHIBS</name>
<gene>
    <name evidence="1" type="primary">rpmI</name>
    <name type="ordered locus">SBO_1377</name>
</gene>
<evidence type="ECO:0000255" key="1">
    <source>
        <dbReference type="HAMAP-Rule" id="MF_00514"/>
    </source>
</evidence>
<evidence type="ECO:0000256" key="2">
    <source>
        <dbReference type="SAM" id="MobiDB-lite"/>
    </source>
</evidence>
<evidence type="ECO:0000305" key="3"/>
<comment type="similarity">
    <text evidence="1">Belongs to the bacterial ribosomal protein bL35 family.</text>
</comment>
<proteinExistence type="inferred from homology"/>
<keyword id="KW-0687">Ribonucleoprotein</keyword>
<keyword id="KW-0689">Ribosomal protein</keyword>